<protein>
    <recommendedName>
        <fullName evidence="1">Nucleoside diphosphate kinase</fullName>
        <shortName evidence="1">NDK</shortName>
        <shortName evidence="1">NDP kinase</shortName>
        <ecNumber evidence="1">2.7.4.6</ecNumber>
    </recommendedName>
    <alternativeName>
        <fullName evidence="1">Nucleoside-2-P kinase</fullName>
    </alternativeName>
</protein>
<accession>P65537</accession>
<accession>Q97NQ9</accession>
<organism>
    <name type="scientific">Streptococcus pneumoniae (strain ATCC BAA-255 / R6)</name>
    <dbReference type="NCBI Taxonomy" id="171101"/>
    <lineage>
        <taxon>Bacteria</taxon>
        <taxon>Bacillati</taxon>
        <taxon>Bacillota</taxon>
        <taxon>Bacilli</taxon>
        <taxon>Lactobacillales</taxon>
        <taxon>Streptococcaceae</taxon>
        <taxon>Streptococcus</taxon>
    </lineage>
</organism>
<gene>
    <name evidence="1" type="primary">ndk</name>
    <name type="ordered locus">spr1775</name>
</gene>
<name>NDK_STRR6</name>
<feature type="chain" id="PRO_0000137057" description="Nucleoside diphosphate kinase">
    <location>
        <begin position="1"/>
        <end position="137"/>
    </location>
</feature>
<feature type="active site" description="Pros-phosphohistidine intermediate" evidence="1">
    <location>
        <position position="121"/>
    </location>
</feature>
<feature type="binding site" evidence="1">
    <location>
        <position position="9"/>
    </location>
    <ligand>
        <name>ATP</name>
        <dbReference type="ChEBI" id="CHEBI:30616"/>
    </ligand>
</feature>
<feature type="binding site" evidence="1">
    <location>
        <position position="58"/>
    </location>
    <ligand>
        <name>ATP</name>
        <dbReference type="ChEBI" id="CHEBI:30616"/>
    </ligand>
</feature>
<feature type="binding site" evidence="1">
    <location>
        <position position="86"/>
    </location>
    <ligand>
        <name>ATP</name>
        <dbReference type="ChEBI" id="CHEBI:30616"/>
    </ligand>
</feature>
<feature type="binding site" evidence="1">
    <location>
        <position position="92"/>
    </location>
    <ligand>
        <name>ATP</name>
        <dbReference type="ChEBI" id="CHEBI:30616"/>
    </ligand>
</feature>
<feature type="binding site" evidence="1">
    <location>
        <position position="103"/>
    </location>
    <ligand>
        <name>ATP</name>
        <dbReference type="ChEBI" id="CHEBI:30616"/>
    </ligand>
</feature>
<feature type="binding site" evidence="1">
    <location>
        <position position="113"/>
    </location>
    <ligand>
        <name>ATP</name>
        <dbReference type="ChEBI" id="CHEBI:30616"/>
    </ligand>
</feature>
<evidence type="ECO:0000255" key="1">
    <source>
        <dbReference type="HAMAP-Rule" id="MF_00451"/>
    </source>
</evidence>
<evidence type="ECO:0000305" key="2"/>
<reference key="1">
    <citation type="journal article" date="2001" name="J. Bacteriol.">
        <title>Genome of the bacterium Streptococcus pneumoniae strain R6.</title>
        <authorList>
            <person name="Hoskins J."/>
            <person name="Alborn W.E. Jr."/>
            <person name="Arnold J."/>
            <person name="Blaszczak L.C."/>
            <person name="Burgett S."/>
            <person name="DeHoff B.S."/>
            <person name="Estrem S.T."/>
            <person name="Fritz L."/>
            <person name="Fu D.-J."/>
            <person name="Fuller W."/>
            <person name="Geringer C."/>
            <person name="Gilmour R."/>
            <person name="Glass J.S."/>
            <person name="Khoja H."/>
            <person name="Kraft A.R."/>
            <person name="Lagace R.E."/>
            <person name="LeBlanc D.J."/>
            <person name="Lee L.N."/>
            <person name="Lefkowitz E.J."/>
            <person name="Lu J."/>
            <person name="Matsushima P."/>
            <person name="McAhren S.M."/>
            <person name="McHenney M."/>
            <person name="McLeaster K."/>
            <person name="Mundy C.W."/>
            <person name="Nicas T.I."/>
            <person name="Norris F.H."/>
            <person name="O'Gara M."/>
            <person name="Peery R.B."/>
            <person name="Robertson G.T."/>
            <person name="Rockey P."/>
            <person name="Sun P.-M."/>
            <person name="Winkler M.E."/>
            <person name="Yang Y."/>
            <person name="Young-Bellido M."/>
            <person name="Zhao G."/>
            <person name="Zook C.A."/>
            <person name="Baltz R.H."/>
            <person name="Jaskunas S.R."/>
            <person name="Rosteck P.R. Jr."/>
            <person name="Skatrud P.L."/>
            <person name="Glass J.I."/>
        </authorList>
    </citation>
    <scope>NUCLEOTIDE SEQUENCE [LARGE SCALE GENOMIC DNA]</scope>
    <source>
        <strain>ATCC BAA-255 / R6</strain>
    </source>
</reference>
<proteinExistence type="inferred from homology"/>
<comment type="function">
    <text evidence="1">Major role in the synthesis of nucleoside triphosphates other than ATP. The ATP gamma phosphate is transferred to the NDP beta phosphate via a ping-pong mechanism, using a phosphorylated active-site intermediate.</text>
</comment>
<comment type="catalytic activity">
    <reaction evidence="1">
        <text>a 2'-deoxyribonucleoside 5'-diphosphate + ATP = a 2'-deoxyribonucleoside 5'-triphosphate + ADP</text>
        <dbReference type="Rhea" id="RHEA:44640"/>
        <dbReference type="ChEBI" id="CHEBI:30616"/>
        <dbReference type="ChEBI" id="CHEBI:61560"/>
        <dbReference type="ChEBI" id="CHEBI:73316"/>
        <dbReference type="ChEBI" id="CHEBI:456216"/>
        <dbReference type="EC" id="2.7.4.6"/>
    </reaction>
</comment>
<comment type="catalytic activity">
    <reaction evidence="1">
        <text>a ribonucleoside 5'-diphosphate + ATP = a ribonucleoside 5'-triphosphate + ADP</text>
        <dbReference type="Rhea" id="RHEA:18113"/>
        <dbReference type="ChEBI" id="CHEBI:30616"/>
        <dbReference type="ChEBI" id="CHEBI:57930"/>
        <dbReference type="ChEBI" id="CHEBI:61557"/>
        <dbReference type="ChEBI" id="CHEBI:456216"/>
        <dbReference type="EC" id="2.7.4.6"/>
    </reaction>
</comment>
<comment type="cofactor">
    <cofactor evidence="1">
        <name>Mg(2+)</name>
        <dbReference type="ChEBI" id="CHEBI:18420"/>
    </cofactor>
</comment>
<comment type="subunit">
    <text evidence="1">Homotetramer.</text>
</comment>
<comment type="subcellular location">
    <subcellularLocation>
        <location evidence="1">Cytoplasm</location>
    </subcellularLocation>
</comment>
<comment type="similarity">
    <text evidence="1 2">Belongs to the NDK family.</text>
</comment>
<keyword id="KW-0067">ATP-binding</keyword>
<keyword id="KW-0963">Cytoplasm</keyword>
<keyword id="KW-0418">Kinase</keyword>
<keyword id="KW-0460">Magnesium</keyword>
<keyword id="KW-0479">Metal-binding</keyword>
<keyword id="KW-0546">Nucleotide metabolism</keyword>
<keyword id="KW-0547">Nucleotide-binding</keyword>
<keyword id="KW-0597">Phosphoprotein</keyword>
<keyword id="KW-1185">Reference proteome</keyword>
<keyword id="KW-0808">Transferase</keyword>
<sequence length="137" mass="15440">MEQTFFIIKPDGVKRGLVGEVLKRIEQRGFTIEKLEFRSQVSEELIDQHYQDLVGQSFYPPIREFMTSGPVLVGVISGPKVIETWRTMMGATRPEEALPGTIRGDFAKAAGENEIIQNVVHGSDSEESAKREIALWF</sequence>
<dbReference type="EC" id="2.7.4.6" evidence="1"/>
<dbReference type="EMBL" id="AE007317">
    <property type="protein sequence ID" value="AAL00578.1"/>
    <property type="molecule type" value="Genomic_DNA"/>
</dbReference>
<dbReference type="PIR" id="E98093">
    <property type="entry name" value="E98093"/>
</dbReference>
<dbReference type="RefSeq" id="NP_359367.1">
    <property type="nucleotide sequence ID" value="NC_003098.1"/>
</dbReference>
<dbReference type="RefSeq" id="WP_000438289.1">
    <property type="nucleotide sequence ID" value="NC_003098.1"/>
</dbReference>
<dbReference type="SMR" id="P65537"/>
<dbReference type="STRING" id="171101.spr1775"/>
<dbReference type="KEGG" id="spr:spr1775"/>
<dbReference type="PATRIC" id="fig|171101.6.peg.1916"/>
<dbReference type="eggNOG" id="COG0105">
    <property type="taxonomic scope" value="Bacteria"/>
</dbReference>
<dbReference type="HOGENOM" id="CLU_060216_6_3_9"/>
<dbReference type="Proteomes" id="UP000000586">
    <property type="component" value="Chromosome"/>
</dbReference>
<dbReference type="GO" id="GO:0005737">
    <property type="term" value="C:cytoplasm"/>
    <property type="evidence" value="ECO:0007669"/>
    <property type="project" value="UniProtKB-SubCell"/>
</dbReference>
<dbReference type="GO" id="GO:0005524">
    <property type="term" value="F:ATP binding"/>
    <property type="evidence" value="ECO:0007669"/>
    <property type="project" value="UniProtKB-UniRule"/>
</dbReference>
<dbReference type="GO" id="GO:0046872">
    <property type="term" value="F:metal ion binding"/>
    <property type="evidence" value="ECO:0007669"/>
    <property type="project" value="UniProtKB-KW"/>
</dbReference>
<dbReference type="GO" id="GO:0004550">
    <property type="term" value="F:nucleoside diphosphate kinase activity"/>
    <property type="evidence" value="ECO:0007669"/>
    <property type="project" value="UniProtKB-UniRule"/>
</dbReference>
<dbReference type="GO" id="GO:0006241">
    <property type="term" value="P:CTP biosynthetic process"/>
    <property type="evidence" value="ECO:0007669"/>
    <property type="project" value="UniProtKB-UniRule"/>
</dbReference>
<dbReference type="GO" id="GO:0006183">
    <property type="term" value="P:GTP biosynthetic process"/>
    <property type="evidence" value="ECO:0007669"/>
    <property type="project" value="UniProtKB-UniRule"/>
</dbReference>
<dbReference type="GO" id="GO:0006163">
    <property type="term" value="P:purine nucleotide metabolic process"/>
    <property type="evidence" value="ECO:0000318"/>
    <property type="project" value="GO_Central"/>
</dbReference>
<dbReference type="GO" id="GO:0006220">
    <property type="term" value="P:pyrimidine nucleotide metabolic process"/>
    <property type="evidence" value="ECO:0000318"/>
    <property type="project" value="GO_Central"/>
</dbReference>
<dbReference type="GO" id="GO:0006228">
    <property type="term" value="P:UTP biosynthetic process"/>
    <property type="evidence" value="ECO:0007669"/>
    <property type="project" value="UniProtKB-UniRule"/>
</dbReference>
<dbReference type="CDD" id="cd04413">
    <property type="entry name" value="NDPk_I"/>
    <property type="match status" value="1"/>
</dbReference>
<dbReference type="FunFam" id="3.30.70.141:FF:000013">
    <property type="entry name" value="Nucleoside diphosphate kinase"/>
    <property type="match status" value="1"/>
</dbReference>
<dbReference type="Gene3D" id="3.30.70.141">
    <property type="entry name" value="Nucleoside diphosphate kinase-like domain"/>
    <property type="match status" value="1"/>
</dbReference>
<dbReference type="HAMAP" id="MF_00451">
    <property type="entry name" value="NDP_kinase"/>
    <property type="match status" value="1"/>
</dbReference>
<dbReference type="InterPro" id="IPR034907">
    <property type="entry name" value="NDK-like_dom"/>
</dbReference>
<dbReference type="InterPro" id="IPR036850">
    <property type="entry name" value="NDK-like_dom_sf"/>
</dbReference>
<dbReference type="InterPro" id="IPR001564">
    <property type="entry name" value="Nucleoside_diP_kinase"/>
</dbReference>
<dbReference type="InterPro" id="IPR023005">
    <property type="entry name" value="Nucleoside_diP_kinase_AS"/>
</dbReference>
<dbReference type="NCBIfam" id="NF001908">
    <property type="entry name" value="PRK00668.1"/>
    <property type="match status" value="1"/>
</dbReference>
<dbReference type="PANTHER" id="PTHR11349">
    <property type="entry name" value="NUCLEOSIDE DIPHOSPHATE KINASE"/>
    <property type="match status" value="1"/>
</dbReference>
<dbReference type="Pfam" id="PF00334">
    <property type="entry name" value="NDK"/>
    <property type="match status" value="1"/>
</dbReference>
<dbReference type="PRINTS" id="PR01243">
    <property type="entry name" value="NUCDPKINASE"/>
</dbReference>
<dbReference type="SMART" id="SM00562">
    <property type="entry name" value="NDK"/>
    <property type="match status" value="1"/>
</dbReference>
<dbReference type="SUPFAM" id="SSF54919">
    <property type="entry name" value="Nucleoside diphosphate kinase, NDK"/>
    <property type="match status" value="1"/>
</dbReference>
<dbReference type="PROSITE" id="PS00469">
    <property type="entry name" value="NDPK"/>
    <property type="match status" value="1"/>
</dbReference>
<dbReference type="PROSITE" id="PS51374">
    <property type="entry name" value="NDPK_LIKE"/>
    <property type="match status" value="1"/>
</dbReference>